<protein>
    <recommendedName>
        <fullName evidence="2">Small ribosomal subunit protein uS7c</fullName>
    </recommendedName>
    <alternativeName>
        <fullName>30S ribosomal protein S7, chloroplastic</fullName>
    </alternativeName>
</protein>
<comment type="function">
    <text evidence="1">One of the primary rRNA binding proteins, it binds directly to 16S rRNA where it nucleates assembly of the head domain of the 30S subunit.</text>
</comment>
<comment type="subunit">
    <text evidence="1">Part of the 30S ribosomal subunit.</text>
</comment>
<comment type="subcellular location">
    <subcellularLocation>
        <location>Plastid</location>
        <location>Chloroplast</location>
    </subcellularLocation>
</comment>
<comment type="similarity">
    <text evidence="2">Belongs to the universal ribosomal protein uS7 family.</text>
</comment>
<keyword id="KW-0150">Chloroplast</keyword>
<keyword id="KW-0934">Plastid</keyword>
<keyword id="KW-0687">Ribonucleoprotein</keyword>
<keyword id="KW-0689">Ribosomal protein</keyword>
<keyword id="KW-0694">RNA-binding</keyword>
<keyword id="KW-0699">rRNA-binding</keyword>
<dbReference type="EMBL" id="DQ422812">
    <property type="protein sequence ID" value="ABD62253.2"/>
    <property type="molecule type" value="Genomic_DNA"/>
</dbReference>
<dbReference type="RefSeq" id="YP_001019138.1">
    <property type="nucleotide sequence ID" value="NC_008822.1"/>
</dbReference>
<dbReference type="SMR" id="Q19V71"/>
<dbReference type="GeneID" id="4783206"/>
<dbReference type="GO" id="GO:0009507">
    <property type="term" value="C:chloroplast"/>
    <property type="evidence" value="ECO:0007669"/>
    <property type="project" value="UniProtKB-SubCell"/>
</dbReference>
<dbReference type="GO" id="GO:0015935">
    <property type="term" value="C:small ribosomal subunit"/>
    <property type="evidence" value="ECO:0007669"/>
    <property type="project" value="InterPro"/>
</dbReference>
<dbReference type="GO" id="GO:0019843">
    <property type="term" value="F:rRNA binding"/>
    <property type="evidence" value="ECO:0007669"/>
    <property type="project" value="UniProtKB-UniRule"/>
</dbReference>
<dbReference type="GO" id="GO:0003735">
    <property type="term" value="F:structural constituent of ribosome"/>
    <property type="evidence" value="ECO:0007669"/>
    <property type="project" value="InterPro"/>
</dbReference>
<dbReference type="GO" id="GO:0006412">
    <property type="term" value="P:translation"/>
    <property type="evidence" value="ECO:0007669"/>
    <property type="project" value="UniProtKB-UniRule"/>
</dbReference>
<dbReference type="CDD" id="cd14871">
    <property type="entry name" value="uS7_Chloroplast"/>
    <property type="match status" value="1"/>
</dbReference>
<dbReference type="FunFam" id="1.10.455.10:FF:000001">
    <property type="entry name" value="30S ribosomal protein S7"/>
    <property type="match status" value="1"/>
</dbReference>
<dbReference type="Gene3D" id="1.10.455.10">
    <property type="entry name" value="Ribosomal protein S7 domain"/>
    <property type="match status" value="1"/>
</dbReference>
<dbReference type="HAMAP" id="MF_00480_B">
    <property type="entry name" value="Ribosomal_uS7_B"/>
    <property type="match status" value="1"/>
</dbReference>
<dbReference type="InterPro" id="IPR000235">
    <property type="entry name" value="Ribosomal_uS7"/>
</dbReference>
<dbReference type="InterPro" id="IPR005717">
    <property type="entry name" value="Ribosomal_uS7_bac/org-type"/>
</dbReference>
<dbReference type="InterPro" id="IPR020606">
    <property type="entry name" value="Ribosomal_uS7_CS"/>
</dbReference>
<dbReference type="InterPro" id="IPR023798">
    <property type="entry name" value="Ribosomal_uS7_dom"/>
</dbReference>
<dbReference type="InterPro" id="IPR036823">
    <property type="entry name" value="Ribosomal_uS7_dom_sf"/>
</dbReference>
<dbReference type="NCBIfam" id="TIGR01029">
    <property type="entry name" value="rpsG_bact"/>
    <property type="match status" value="1"/>
</dbReference>
<dbReference type="PANTHER" id="PTHR11205">
    <property type="entry name" value="RIBOSOMAL PROTEIN S7"/>
    <property type="match status" value="1"/>
</dbReference>
<dbReference type="Pfam" id="PF00177">
    <property type="entry name" value="Ribosomal_S7"/>
    <property type="match status" value="1"/>
</dbReference>
<dbReference type="PIRSF" id="PIRSF002122">
    <property type="entry name" value="RPS7p_RPS7a_RPS5e_RPS7o"/>
    <property type="match status" value="1"/>
</dbReference>
<dbReference type="SUPFAM" id="SSF47973">
    <property type="entry name" value="Ribosomal protein S7"/>
    <property type="match status" value="1"/>
</dbReference>
<dbReference type="PROSITE" id="PS00052">
    <property type="entry name" value="RIBOSOMAL_S7"/>
    <property type="match status" value="1"/>
</dbReference>
<geneLocation type="chloroplast"/>
<feature type="chain" id="PRO_0000344331" description="Small ribosomal subunit protein uS7c">
    <location>
        <begin position="1"/>
        <end position="156"/>
    </location>
</feature>
<name>RR7_CHLAT</name>
<accession>Q19V71</accession>
<organism>
    <name type="scientific">Chlorokybus atmophyticus</name>
    <name type="common">Soil alga</name>
    <dbReference type="NCBI Taxonomy" id="3144"/>
    <lineage>
        <taxon>Eukaryota</taxon>
        <taxon>Viridiplantae</taxon>
        <taxon>Streptophyta</taxon>
        <taxon>Chlorokybophyceae</taxon>
        <taxon>Chlorokybales</taxon>
        <taxon>Chlorokybaceae</taxon>
        <taxon>Chlorokybus</taxon>
    </lineage>
</organism>
<proteinExistence type="inferred from homology"/>
<reference key="1">
    <citation type="journal article" date="2007" name="BMC Biol.">
        <title>A clade uniting the green algae Mesostigma viride and Chlorokybus atmophyticus represents the deepest branch of the Streptophyta in chloroplast genome-based phylogenies.</title>
        <authorList>
            <person name="Lemieux C."/>
            <person name="Otis C."/>
            <person name="Turmel M."/>
        </authorList>
    </citation>
    <scope>NUCLEOTIDE SEQUENCE [LARGE SCALE GENOMIC DNA]</scope>
    <source>
        <strain>SAG 48.80</strain>
    </source>
</reference>
<evidence type="ECO:0000250" key="1"/>
<evidence type="ECO:0000305" key="2"/>
<gene>
    <name type="primary">rps7</name>
</gene>
<sequence>MSRRNAPKKRPISSDPIYRSRLVSMVISHILKNGKKSLAHRILYQAMKNIEEKTEKDPLKILQQAVLNATPLVEVKARRIGGSTYQVPREVKPERGTALALRWLLSSARKRPGRDMASKLTNELLDAANEVGNAIRKREETHRMAEANKAFSHYRF</sequence>